<accession>Q211G2</accession>
<reference key="1">
    <citation type="submission" date="2006-03" db="EMBL/GenBank/DDBJ databases">
        <title>Complete sequence of Rhodopseudomonas palustris BisB18.</title>
        <authorList>
            <consortium name="US DOE Joint Genome Institute"/>
            <person name="Copeland A."/>
            <person name="Lucas S."/>
            <person name="Lapidus A."/>
            <person name="Barry K."/>
            <person name="Detter J.C."/>
            <person name="Glavina del Rio T."/>
            <person name="Hammon N."/>
            <person name="Israni S."/>
            <person name="Dalin E."/>
            <person name="Tice H."/>
            <person name="Pitluck S."/>
            <person name="Chain P."/>
            <person name="Malfatti S."/>
            <person name="Shin M."/>
            <person name="Vergez L."/>
            <person name="Schmutz J."/>
            <person name="Larimer F."/>
            <person name="Land M."/>
            <person name="Hauser L."/>
            <person name="Pelletier D.A."/>
            <person name="Kyrpides N."/>
            <person name="Anderson I."/>
            <person name="Oda Y."/>
            <person name="Harwood C.S."/>
            <person name="Richardson P."/>
        </authorList>
    </citation>
    <scope>NUCLEOTIDE SEQUENCE [LARGE SCALE GENOMIC DNA]</scope>
    <source>
        <strain>BisB18</strain>
    </source>
</reference>
<feature type="chain" id="PRO_0000290916" description="Small ribosomal subunit protein uS8">
    <location>
        <begin position="1"/>
        <end position="132"/>
    </location>
</feature>
<gene>
    <name evidence="1" type="primary">rpsH</name>
    <name type="ordered locus">RPC_3434</name>
</gene>
<keyword id="KW-0687">Ribonucleoprotein</keyword>
<keyword id="KW-0689">Ribosomal protein</keyword>
<keyword id="KW-0694">RNA-binding</keyword>
<keyword id="KW-0699">rRNA-binding</keyword>
<proteinExistence type="inferred from homology"/>
<organism>
    <name type="scientific">Rhodopseudomonas palustris (strain BisB18)</name>
    <dbReference type="NCBI Taxonomy" id="316056"/>
    <lineage>
        <taxon>Bacteria</taxon>
        <taxon>Pseudomonadati</taxon>
        <taxon>Pseudomonadota</taxon>
        <taxon>Alphaproteobacteria</taxon>
        <taxon>Hyphomicrobiales</taxon>
        <taxon>Nitrobacteraceae</taxon>
        <taxon>Rhodopseudomonas</taxon>
    </lineage>
</organism>
<dbReference type="EMBL" id="CP000301">
    <property type="protein sequence ID" value="ABD88974.1"/>
    <property type="molecule type" value="Genomic_DNA"/>
</dbReference>
<dbReference type="SMR" id="Q211G2"/>
<dbReference type="STRING" id="316056.RPC_3434"/>
<dbReference type="KEGG" id="rpc:RPC_3434"/>
<dbReference type="eggNOG" id="COG0096">
    <property type="taxonomic scope" value="Bacteria"/>
</dbReference>
<dbReference type="HOGENOM" id="CLU_098428_0_0_5"/>
<dbReference type="OrthoDB" id="9802617at2"/>
<dbReference type="GO" id="GO:1990904">
    <property type="term" value="C:ribonucleoprotein complex"/>
    <property type="evidence" value="ECO:0007669"/>
    <property type="project" value="UniProtKB-KW"/>
</dbReference>
<dbReference type="GO" id="GO:0005840">
    <property type="term" value="C:ribosome"/>
    <property type="evidence" value="ECO:0007669"/>
    <property type="project" value="UniProtKB-KW"/>
</dbReference>
<dbReference type="GO" id="GO:0019843">
    <property type="term" value="F:rRNA binding"/>
    <property type="evidence" value="ECO:0007669"/>
    <property type="project" value="UniProtKB-UniRule"/>
</dbReference>
<dbReference type="GO" id="GO:0003735">
    <property type="term" value="F:structural constituent of ribosome"/>
    <property type="evidence" value="ECO:0007669"/>
    <property type="project" value="InterPro"/>
</dbReference>
<dbReference type="GO" id="GO:0006412">
    <property type="term" value="P:translation"/>
    <property type="evidence" value="ECO:0007669"/>
    <property type="project" value="UniProtKB-UniRule"/>
</dbReference>
<dbReference type="FunFam" id="3.30.1370.30:FF:000002">
    <property type="entry name" value="30S ribosomal protein S8"/>
    <property type="match status" value="1"/>
</dbReference>
<dbReference type="FunFam" id="3.30.1490.10:FF:000001">
    <property type="entry name" value="30S ribosomal protein S8"/>
    <property type="match status" value="1"/>
</dbReference>
<dbReference type="Gene3D" id="3.30.1370.30">
    <property type="match status" value="1"/>
</dbReference>
<dbReference type="Gene3D" id="3.30.1490.10">
    <property type="match status" value="1"/>
</dbReference>
<dbReference type="HAMAP" id="MF_01302_B">
    <property type="entry name" value="Ribosomal_uS8_B"/>
    <property type="match status" value="1"/>
</dbReference>
<dbReference type="InterPro" id="IPR000630">
    <property type="entry name" value="Ribosomal_uS8"/>
</dbReference>
<dbReference type="InterPro" id="IPR047863">
    <property type="entry name" value="Ribosomal_uS8_CS"/>
</dbReference>
<dbReference type="InterPro" id="IPR035987">
    <property type="entry name" value="Ribosomal_uS8_sf"/>
</dbReference>
<dbReference type="NCBIfam" id="NF001109">
    <property type="entry name" value="PRK00136.1"/>
    <property type="match status" value="1"/>
</dbReference>
<dbReference type="PANTHER" id="PTHR11758">
    <property type="entry name" value="40S RIBOSOMAL PROTEIN S15A"/>
    <property type="match status" value="1"/>
</dbReference>
<dbReference type="Pfam" id="PF00410">
    <property type="entry name" value="Ribosomal_S8"/>
    <property type="match status" value="1"/>
</dbReference>
<dbReference type="SUPFAM" id="SSF56047">
    <property type="entry name" value="Ribosomal protein S8"/>
    <property type="match status" value="1"/>
</dbReference>
<dbReference type="PROSITE" id="PS00053">
    <property type="entry name" value="RIBOSOMAL_S8"/>
    <property type="match status" value="1"/>
</dbReference>
<sequence>MSTHDPISDLITRIRNAQMRAKSKVSTPGSKMRANVLEVLKNEGYIRGYASVDHASGRSELEIELKYFDGEPVIREIERVSKPGRRVYASVKNLPRVNNGLGISVLSTPKGIMADHEARDANVGGEVLFTVF</sequence>
<protein>
    <recommendedName>
        <fullName evidence="1">Small ribosomal subunit protein uS8</fullName>
    </recommendedName>
    <alternativeName>
        <fullName evidence="2">30S ribosomal protein S8</fullName>
    </alternativeName>
</protein>
<evidence type="ECO:0000255" key="1">
    <source>
        <dbReference type="HAMAP-Rule" id="MF_01302"/>
    </source>
</evidence>
<evidence type="ECO:0000305" key="2"/>
<comment type="function">
    <text evidence="1">One of the primary rRNA binding proteins, it binds directly to 16S rRNA central domain where it helps coordinate assembly of the platform of the 30S subunit.</text>
</comment>
<comment type="subunit">
    <text evidence="1">Part of the 30S ribosomal subunit. Contacts proteins S5 and S12.</text>
</comment>
<comment type="similarity">
    <text evidence="1">Belongs to the universal ribosomal protein uS8 family.</text>
</comment>
<name>RS8_RHOPB</name>